<keyword id="KW-0150">Chloroplast</keyword>
<keyword id="KW-0934">Plastid</keyword>
<keyword id="KW-0687">Ribonucleoprotein</keyword>
<keyword id="KW-0689">Ribosomal protein</keyword>
<keyword id="KW-0694">RNA-binding</keyword>
<keyword id="KW-0699">rRNA-binding</keyword>
<comment type="function">
    <text evidence="1">One of the primary rRNA binding proteins, it binds directly to 16S rRNA central domain where it helps coordinate assembly of the platform of the 30S subunit.</text>
</comment>
<comment type="subunit">
    <text evidence="1">Part of the 30S ribosomal subunit.</text>
</comment>
<comment type="subcellular location">
    <subcellularLocation>
        <location>Plastid</location>
        <location>Chloroplast</location>
    </subcellularLocation>
</comment>
<comment type="similarity">
    <text evidence="2">Belongs to the universal ribosomal protein uS8 family.</text>
</comment>
<organism>
    <name type="scientific">Huperzia lucidula</name>
    <name type="common">Shining clubmoss</name>
    <name type="synonym">Lycopodium lucidulum</name>
    <dbReference type="NCBI Taxonomy" id="37429"/>
    <lineage>
        <taxon>Eukaryota</taxon>
        <taxon>Viridiplantae</taxon>
        <taxon>Streptophyta</taxon>
        <taxon>Embryophyta</taxon>
        <taxon>Tracheophyta</taxon>
        <taxon>Lycopodiopsida</taxon>
        <taxon>Lycopodiales</taxon>
        <taxon>Lycopodiaceae</taxon>
        <taxon>Huperzioideae</taxon>
        <taxon>Huperzia</taxon>
    </lineage>
</organism>
<accession>Q5SD16</accession>
<gene>
    <name type="primary">rps8</name>
</gene>
<evidence type="ECO:0000250" key="1"/>
<evidence type="ECO:0000305" key="2"/>
<feature type="chain" id="PRO_0000126573" description="Small ribosomal subunit protein uS8c">
    <location>
        <begin position="1"/>
        <end position="132"/>
    </location>
</feature>
<proteinExistence type="inferred from homology"/>
<name>RR8_HUPLU</name>
<protein>
    <recommendedName>
        <fullName evidence="2">Small ribosomal subunit protein uS8c</fullName>
    </recommendedName>
    <alternativeName>
        <fullName>30S ribosomal protein S8, chloroplastic</fullName>
    </alternativeName>
</protein>
<reference key="1">
    <citation type="journal article" date="2005" name="Gene">
        <title>The first complete chloroplast genome sequence of a lycophyte, Huperzia lucidula (Lycopodiaceae).</title>
        <authorList>
            <person name="Wolf P.G."/>
            <person name="Karol K.G."/>
            <person name="Mandoli D.F."/>
            <person name="Kuehl J.V."/>
            <person name="Arumuganathan K."/>
            <person name="Ellis M.W."/>
            <person name="Mishler B.D."/>
            <person name="Kelch D.G."/>
            <person name="Olmstead R.G."/>
            <person name="Boore J.L."/>
        </authorList>
    </citation>
    <scope>NUCLEOTIDE SEQUENCE [LARGE SCALE GENOMIC DNA]</scope>
</reference>
<sequence>MGNDTIANMITSVRNANLGKEETVRVPATNINRSIGKILLQEGFVKNLGELREGTNHFMILTLKYRGRKREPYITTLRRISKPGLRLYYNYKKIPKVLGGMGVVIPSTSCGTMTDREARQKQIGGEILCYVW</sequence>
<dbReference type="EMBL" id="AY660566">
    <property type="protein sequence ID" value="AAT80689.1"/>
    <property type="molecule type" value="Genomic_DNA"/>
</dbReference>
<dbReference type="RefSeq" id="YP_209493.1">
    <property type="nucleotide sequence ID" value="NC_006861.1"/>
</dbReference>
<dbReference type="SMR" id="Q5SD16"/>
<dbReference type="GeneID" id="3283809"/>
<dbReference type="GO" id="GO:0009507">
    <property type="term" value="C:chloroplast"/>
    <property type="evidence" value="ECO:0007669"/>
    <property type="project" value="UniProtKB-SubCell"/>
</dbReference>
<dbReference type="GO" id="GO:1990904">
    <property type="term" value="C:ribonucleoprotein complex"/>
    <property type="evidence" value="ECO:0007669"/>
    <property type="project" value="UniProtKB-KW"/>
</dbReference>
<dbReference type="GO" id="GO:0005840">
    <property type="term" value="C:ribosome"/>
    <property type="evidence" value="ECO:0007669"/>
    <property type="project" value="UniProtKB-KW"/>
</dbReference>
<dbReference type="GO" id="GO:0019843">
    <property type="term" value="F:rRNA binding"/>
    <property type="evidence" value="ECO:0007669"/>
    <property type="project" value="UniProtKB-UniRule"/>
</dbReference>
<dbReference type="GO" id="GO:0003735">
    <property type="term" value="F:structural constituent of ribosome"/>
    <property type="evidence" value="ECO:0007669"/>
    <property type="project" value="InterPro"/>
</dbReference>
<dbReference type="GO" id="GO:0006412">
    <property type="term" value="P:translation"/>
    <property type="evidence" value="ECO:0007669"/>
    <property type="project" value="UniProtKB-UniRule"/>
</dbReference>
<dbReference type="FunFam" id="3.30.1490.10:FF:000001">
    <property type="entry name" value="30S ribosomal protein S8"/>
    <property type="match status" value="1"/>
</dbReference>
<dbReference type="Gene3D" id="3.30.1370.30">
    <property type="match status" value="1"/>
</dbReference>
<dbReference type="Gene3D" id="3.30.1490.10">
    <property type="match status" value="1"/>
</dbReference>
<dbReference type="HAMAP" id="MF_01302_B">
    <property type="entry name" value="Ribosomal_uS8_B"/>
    <property type="match status" value="1"/>
</dbReference>
<dbReference type="InterPro" id="IPR000630">
    <property type="entry name" value="Ribosomal_uS8"/>
</dbReference>
<dbReference type="InterPro" id="IPR035987">
    <property type="entry name" value="Ribosomal_uS8_sf"/>
</dbReference>
<dbReference type="NCBIfam" id="NF001109">
    <property type="entry name" value="PRK00136.1"/>
    <property type="match status" value="1"/>
</dbReference>
<dbReference type="PANTHER" id="PTHR11758">
    <property type="entry name" value="40S RIBOSOMAL PROTEIN S15A"/>
    <property type="match status" value="1"/>
</dbReference>
<dbReference type="Pfam" id="PF00410">
    <property type="entry name" value="Ribosomal_S8"/>
    <property type="match status" value="1"/>
</dbReference>
<dbReference type="SUPFAM" id="SSF56047">
    <property type="entry name" value="Ribosomal protein S8"/>
    <property type="match status" value="1"/>
</dbReference>
<geneLocation type="chloroplast"/>